<sequence length="244" mass="26906">MSTSKRKRADEVQWNKRSTKKKASAPPVKKTGGKADRPSLQIQTLLHSGDTMITVPSGGGCDLISTYARGSDEGNRHTSETLTYKVGVDYHFVADAGACRYSNRGTGVMWLVYDTTPGGNSPSTKDIFAYPDALVAWPTTWKVSRELCHRFVVKRRWLFTMETDGRIGSDIPPTNQSWPPCKRNIDFHKFTSGLGVRTQWKNVTDGGVGAIQRGALYMVIAPGNGVTFTAHGQTRLYFKSVGNQ</sequence>
<accession>Q91MG3</accession>
<feature type="chain" id="PRO_0000316922" description="Capsid protein">
    <location>
        <begin position="1"/>
        <end position="244"/>
    </location>
</feature>
<feature type="region of interest" description="Disordered" evidence="2">
    <location>
        <begin position="1"/>
        <end position="38"/>
    </location>
</feature>
<feature type="short sequence motif" description="Bipartite nuclear localization signal" evidence="1">
    <location>
        <begin position="1"/>
        <end position="24"/>
    </location>
</feature>
<keyword id="KW-0167">Capsid protein</keyword>
<keyword id="KW-0238">DNA-binding</keyword>
<keyword id="KW-1048">Host nucleus</keyword>
<keyword id="KW-1140">T=1 icosahedral capsid protein</keyword>
<keyword id="KW-1163">Viral penetration into host nucleus</keyword>
<keyword id="KW-0946">Virion</keyword>
<keyword id="KW-1160">Virus entry into host cell</keyword>
<organism>
    <name type="scientific">Maize streak virus genotype E (isolate Pat)</name>
    <name type="common">MSV</name>
    <dbReference type="NCBI Taxonomy" id="268331"/>
    <lineage>
        <taxon>Viruses</taxon>
        <taxon>Monodnaviria</taxon>
        <taxon>Shotokuvirae</taxon>
        <taxon>Cressdnaviricota</taxon>
        <taxon>Repensiviricetes</taxon>
        <taxon>Geplafuvirales</taxon>
        <taxon>Geminiviridae</taxon>
        <taxon>Mastrevirus</taxon>
        <taxon>Maize streak virus</taxon>
    </lineage>
</organism>
<name>CAPSD_MSVPA</name>
<reference key="1">
    <citation type="journal article" date="2001" name="Virology">
        <title>Sequence diversity and virulence in Zea mays of Maize streak virus isolates.</title>
        <authorList>
            <person name="Martin D.P."/>
            <person name="Willment J.A."/>
            <person name="Billharz R."/>
            <person name="Velders R."/>
            <person name="Odhiambo B."/>
            <person name="Njuguna J."/>
            <person name="James D."/>
            <person name="Rybicki E.P."/>
        </authorList>
    </citation>
    <scope>NUCLEOTIDE SEQUENCE [GENOMIC DNA]</scope>
</reference>
<evidence type="ECO:0000250" key="1"/>
<evidence type="ECO:0000256" key="2">
    <source>
        <dbReference type="SAM" id="MobiDB-lite"/>
    </source>
</evidence>
<evidence type="ECO:0000305" key="3"/>
<comment type="function">
    <text evidence="1">Encapsidates the viral genome into characteristic twinned ('geminate') particles. Binds the genomic viral ssDNA and shuttles it into and out of the cell nucleus. Plays a role in protection of the genome from degradation, virus acquisition and transmission by insect vectors, infectivity, and systemic movement. The CP of monopartite geminiviruses is absolutely essential for virus movement (By similarity).</text>
</comment>
<comment type="subunit">
    <text evidence="1">Homomultimer. Interacts with the movement protein. Binds to single-stranded and double-stranded viral DNA (By similarity).</text>
</comment>
<comment type="subcellular location">
    <subcellularLocation>
        <location evidence="1">Virion</location>
    </subcellularLocation>
    <subcellularLocation>
        <location evidence="1">Host nucleus</location>
    </subcellularLocation>
    <text evidence="1">It is actively transported into the host cell nucleus. It may be exported out of the nucleus through a nuclear export signal for cell-to-cell movement and spread (By similarity).</text>
</comment>
<comment type="similarity">
    <text evidence="3">Belongs to the geminiviridae capsid protein family.</text>
</comment>
<proteinExistence type="inferred from homology"/>
<organismHost>
    <name type="scientific">Avena sativa</name>
    <name type="common">Oat</name>
    <dbReference type="NCBI Taxonomy" id="4498"/>
</organismHost>
<organismHost>
    <name type="scientific">Axonopus compressus</name>
    <dbReference type="NCBI Taxonomy" id="217170"/>
</organismHost>
<organismHost>
    <name type="scientific">Cenchrus americanus</name>
    <name type="common">Pearl millet</name>
    <name type="synonym">Pennisetum glaucum</name>
    <dbReference type="NCBI Taxonomy" id="4543"/>
</organismHost>
<organismHost>
    <name type="scientific">Cenchrus polystachios</name>
    <dbReference type="NCBI Taxonomy" id="281129"/>
</organismHost>
<organismHost>
    <name type="scientific">Coix lacryma-jobi</name>
    <name type="common">Job's tears</name>
    <dbReference type="NCBI Taxonomy" id="4505"/>
</organismHost>
<organismHost>
    <name type="scientific">Dactyloctenium aegyptium</name>
    <dbReference type="NCBI Taxonomy" id="270102"/>
</organismHost>
<organismHost>
    <name type="scientific">Digitaria</name>
    <dbReference type="NCBI Taxonomy" id="66017"/>
</organismHost>
<organismHost>
    <name type="scientific">Echinochloa colona</name>
    <dbReference type="NCBI Taxonomy" id="90396"/>
</organismHost>
<organismHost>
    <name type="scientific">Eleusine coracana</name>
    <name type="common">Indian finger millet</name>
    <name type="synonym">Ragi</name>
    <dbReference type="NCBI Taxonomy" id="4511"/>
</organismHost>
<organismHost>
    <name type="scientific">Eleusine indica</name>
    <name type="common">Goosegrass</name>
    <name type="synonym">Cynosurus indicus</name>
    <dbReference type="NCBI Taxonomy" id="29674"/>
</organismHost>
<organismHost>
    <name type="scientific">Hordeum vulgare</name>
    <name type="common">Barley</name>
    <dbReference type="NCBI Taxonomy" id="4513"/>
</organismHost>
<organismHost>
    <name type="scientific">Megathyrsus maximus</name>
    <dbReference type="NCBI Taxonomy" id="59788"/>
</organismHost>
<organismHost>
    <name type="scientific">Melinis repens</name>
    <name type="common">Red Natal grass</name>
    <name type="synonym">Rhynchelytrum repens</name>
    <dbReference type="NCBI Taxonomy" id="29709"/>
</organismHost>
<organismHost>
    <name type="scientific">Oryza glaberrima</name>
    <name type="common">African rice</name>
    <dbReference type="NCBI Taxonomy" id="4538"/>
</organismHost>
<organismHost>
    <name type="scientific">Oryza sativa</name>
    <name type="common">Rice</name>
    <dbReference type="NCBI Taxonomy" id="4530"/>
</organismHost>
<organismHost>
    <name type="scientific">Paspalum conjugatum</name>
    <name type="common">Hilo grass</name>
    <dbReference type="NCBI Taxonomy" id="158143"/>
</organismHost>
<organismHost>
    <name type="scientific">Paspalum notatum</name>
    <name type="common">Bahia grass</name>
    <dbReference type="NCBI Taxonomy" id="147272"/>
</organismHost>
<organismHost>
    <name type="scientific">Paspalum scrobiculatum</name>
    <dbReference type="NCBI Taxonomy" id="173849"/>
</organismHost>
<organismHost>
    <name type="scientific">Rottboellia cochinchinensis</name>
    <dbReference type="NCBI Taxonomy" id="300125"/>
</organismHost>
<organismHost>
    <name type="scientific">Saccharum officinarum</name>
    <name type="common">Sugarcane</name>
    <dbReference type="NCBI Taxonomy" id="4547"/>
</organismHost>
<organismHost>
    <name type="scientific">Setaria barbata</name>
    <dbReference type="NCBI Taxonomy" id="192628"/>
</organismHost>
<organismHost>
    <name type="scientific">Triticum aestivum</name>
    <name type="common">Wheat</name>
    <dbReference type="NCBI Taxonomy" id="4565"/>
</organismHost>
<organismHost>
    <name type="scientific">Urochloa deflexa</name>
    <dbReference type="NCBI Taxonomy" id="240436"/>
</organismHost>
<organismHost>
    <name type="scientific">Zea mays</name>
    <name type="common">Maize</name>
    <dbReference type="NCBI Taxonomy" id="4577"/>
</organismHost>
<gene>
    <name type="ORF">V1</name>
</gene>
<dbReference type="EMBL" id="AF329888">
    <property type="protein sequence ID" value="AAK73468.1"/>
    <property type="molecule type" value="Genomic_DNA"/>
</dbReference>
<dbReference type="SMR" id="Q91MG3"/>
<dbReference type="Proteomes" id="UP000007780">
    <property type="component" value="Genome"/>
</dbReference>
<dbReference type="GO" id="GO:0043657">
    <property type="term" value="C:host cell"/>
    <property type="evidence" value="ECO:0007669"/>
    <property type="project" value="GOC"/>
</dbReference>
<dbReference type="GO" id="GO:0042025">
    <property type="term" value="C:host cell nucleus"/>
    <property type="evidence" value="ECO:0007669"/>
    <property type="project" value="UniProtKB-SubCell"/>
</dbReference>
<dbReference type="GO" id="GO:0039615">
    <property type="term" value="C:T=1 icosahedral viral capsid"/>
    <property type="evidence" value="ECO:0007669"/>
    <property type="project" value="UniProtKB-KW"/>
</dbReference>
<dbReference type="GO" id="GO:0003677">
    <property type="term" value="F:DNA binding"/>
    <property type="evidence" value="ECO:0007669"/>
    <property type="project" value="UniProtKB-KW"/>
</dbReference>
<dbReference type="GO" id="GO:0005198">
    <property type="term" value="F:structural molecule activity"/>
    <property type="evidence" value="ECO:0007669"/>
    <property type="project" value="InterPro"/>
</dbReference>
<dbReference type="GO" id="GO:0046718">
    <property type="term" value="P:symbiont entry into host cell"/>
    <property type="evidence" value="ECO:0007669"/>
    <property type="project" value="UniProtKB-KW"/>
</dbReference>
<dbReference type="GO" id="GO:0075732">
    <property type="term" value="P:viral penetration into host nucleus"/>
    <property type="evidence" value="ECO:0007669"/>
    <property type="project" value="UniProtKB-KW"/>
</dbReference>
<dbReference type="Gene3D" id="2.60.120.20">
    <property type="match status" value="1"/>
</dbReference>
<dbReference type="InterPro" id="IPR000143">
    <property type="entry name" value="Gemcoat_MSV"/>
</dbReference>
<dbReference type="InterPro" id="IPR000263">
    <property type="entry name" value="GV_A/BR1_coat"/>
</dbReference>
<dbReference type="InterPro" id="IPR029053">
    <property type="entry name" value="Viral_coat"/>
</dbReference>
<dbReference type="Pfam" id="PF00844">
    <property type="entry name" value="Gemini_coat"/>
    <property type="match status" value="1"/>
</dbReference>
<dbReference type="PRINTS" id="PR00223">
    <property type="entry name" value="GEMCOATARBR1"/>
</dbReference>
<dbReference type="PRINTS" id="PR00226">
    <property type="entry name" value="GEMCOATMSV"/>
</dbReference>
<protein>
    <recommendedName>
        <fullName>Capsid protein</fullName>
    </recommendedName>
    <alternativeName>
        <fullName>Coat protein</fullName>
        <shortName>CP</shortName>
    </alternativeName>
</protein>